<organism>
    <name type="scientific">Mycobacterium tuberculosis (strain CDC 1551 / Oshkosh)</name>
    <dbReference type="NCBI Taxonomy" id="83331"/>
    <lineage>
        <taxon>Bacteria</taxon>
        <taxon>Bacillati</taxon>
        <taxon>Actinomycetota</taxon>
        <taxon>Actinomycetes</taxon>
        <taxon>Mycobacteriales</taxon>
        <taxon>Mycobacteriaceae</taxon>
        <taxon>Mycobacterium</taxon>
        <taxon>Mycobacterium tuberculosis complex</taxon>
    </lineage>
</organism>
<evidence type="ECO:0000250" key="1"/>
<evidence type="ECO:0000256" key="2">
    <source>
        <dbReference type="SAM" id="MobiDB-lite"/>
    </source>
</evidence>
<name>Y2653_MYCTO</name>
<accession>P9WJ12</accession>
<accession>L0TAH9</accession>
<accession>P71950</accession>
<accession>Q7D6U1</accession>
<proteinExistence type="inferred from homology"/>
<sequence>MTHKRTKRQPAIAAGLNAPRRNRVGRQHGWPADVPSAEQRRAQRQRDLEAIRRAYAEMVATSHEIDDDTAELALLSMHLDDEQRRLEAGMKLGWHPYHFPDEPDSKQ</sequence>
<reference key="1">
    <citation type="journal article" date="2002" name="J. Bacteriol.">
        <title>Whole-genome comparison of Mycobacterium tuberculosis clinical and laboratory strains.</title>
        <authorList>
            <person name="Fleischmann R.D."/>
            <person name="Alland D."/>
            <person name="Eisen J.A."/>
            <person name="Carpenter L."/>
            <person name="White O."/>
            <person name="Peterson J.D."/>
            <person name="DeBoy R.T."/>
            <person name="Dodson R.J."/>
            <person name="Gwinn M.L."/>
            <person name="Haft D.H."/>
            <person name="Hickey E.K."/>
            <person name="Kolonay J.F."/>
            <person name="Nelson W.C."/>
            <person name="Umayam L.A."/>
            <person name="Ermolaeva M.D."/>
            <person name="Salzberg S.L."/>
            <person name="Delcher A."/>
            <person name="Utterback T.R."/>
            <person name="Weidman J.F."/>
            <person name="Khouri H.M."/>
            <person name="Gill J."/>
            <person name="Mikula A."/>
            <person name="Bishai W."/>
            <person name="Jacobs W.R. Jr."/>
            <person name="Venter J.C."/>
            <person name="Fraser C.M."/>
        </authorList>
    </citation>
    <scope>NUCLEOTIDE SEQUENCE [LARGE SCALE GENOMIC DNA]</scope>
    <source>
        <strain>CDC 1551 / Oshkosh</strain>
    </source>
</reference>
<feature type="chain" id="PRO_0000427910" description="Toxin MT2730">
    <location>
        <begin position="1"/>
        <end position="107"/>
    </location>
</feature>
<feature type="region of interest" description="Disordered" evidence="2">
    <location>
        <begin position="1"/>
        <end position="42"/>
    </location>
</feature>
<gene>
    <name type="ordered locus">MT2730</name>
</gene>
<keyword id="KW-1185">Reference proteome</keyword>
<keyword id="KW-1277">Toxin-antitoxin system</keyword>
<protein>
    <recommendedName>
        <fullName>Toxin MT2730</fullName>
    </recommendedName>
</protein>
<dbReference type="EMBL" id="AE000516">
    <property type="protein sequence ID" value="AAK47044.1"/>
    <property type="molecule type" value="Genomic_DNA"/>
</dbReference>
<dbReference type="PIR" id="A70966">
    <property type="entry name" value="A70966"/>
</dbReference>
<dbReference type="RefSeq" id="WP_003899414.1">
    <property type="nucleotide sequence ID" value="NZ_KK341227.1"/>
</dbReference>
<dbReference type="SMR" id="P9WJ12"/>
<dbReference type="KEGG" id="mtc:MT2730"/>
<dbReference type="PATRIC" id="fig|83331.31.peg.2940"/>
<dbReference type="HOGENOM" id="CLU_153838_0_0_11"/>
<dbReference type="Proteomes" id="UP000001020">
    <property type="component" value="Chromosome"/>
</dbReference>
<comment type="function">
    <text evidence="1">Toxic component of a type II toxin-antitoxin (TA) system. Its toxic effect is neutralized by coexpression with cognate antitoxin MT2731 (By similarity).</text>
</comment>